<name>G6PI_SYMTH</name>
<accession>Q67QQ0</accession>
<proteinExistence type="inferred from homology"/>
<comment type="function">
    <text evidence="1">Catalyzes the reversible isomerization of glucose-6-phosphate to fructose-6-phosphate.</text>
</comment>
<comment type="catalytic activity">
    <reaction evidence="1">
        <text>alpha-D-glucose 6-phosphate = beta-D-fructose 6-phosphate</text>
        <dbReference type="Rhea" id="RHEA:11816"/>
        <dbReference type="ChEBI" id="CHEBI:57634"/>
        <dbReference type="ChEBI" id="CHEBI:58225"/>
        <dbReference type="EC" id="5.3.1.9"/>
    </reaction>
</comment>
<comment type="pathway">
    <text evidence="1">Carbohydrate biosynthesis; gluconeogenesis.</text>
</comment>
<comment type="pathway">
    <text evidence="1">Carbohydrate degradation; glycolysis; D-glyceraldehyde 3-phosphate and glycerone phosphate from D-glucose: step 2/4.</text>
</comment>
<comment type="subcellular location">
    <subcellularLocation>
        <location evidence="1">Cytoplasm</location>
    </subcellularLocation>
</comment>
<comment type="similarity">
    <text evidence="1">Belongs to the GPI family.</text>
</comment>
<sequence>MSSSLRFTVSPSLLGPHPHELTYQAEAIRIAHRMLHERTGPGAGFTGWLDLPERYDREEFRRIQEAAARIRGDSDVLVVIGIGGSYLGARATVEALGHAFHNLLPPERRGAPQIFFAGTDLSPRYLTELLDVLEDREVSLNVVSKSGTTTEPAIAFRLLRNWMERRYGKEGARRRIYATTDAARGALKQLADAEGYTRFVIPDDVGGRYSVLTAVGLLPIAAAGIDIDALMAGAAAAAAAYSDPDLERNPCYQYAAARNALYRKGMTTEVLVTYEPALKATAEWWKQLFGESEGKDGKGIFPAAAAFTTDLHSLGQYIQEGMRNLFETVVHVERPSVDIPLPPGDEGDGLGFLGGQTLHHVNHTAFLATRLAHTEGGVPNLTLTLPELTPYHYGYMLYFFMKACAISGYLLGVNPFDQPGVEAYKQNMYALLGKPGFEARRAEIEERL</sequence>
<protein>
    <recommendedName>
        <fullName evidence="1">Glucose-6-phosphate isomerase</fullName>
        <shortName evidence="1">GPI</shortName>
        <ecNumber evidence="1">5.3.1.9</ecNumber>
    </recommendedName>
    <alternativeName>
        <fullName evidence="1">Phosphoglucose isomerase</fullName>
        <shortName evidence="1">PGI</shortName>
    </alternativeName>
    <alternativeName>
        <fullName evidence="1">Phosphohexose isomerase</fullName>
        <shortName evidence="1">PHI</shortName>
    </alternativeName>
</protein>
<feature type="chain" id="PRO_0000180751" description="Glucose-6-phosphate isomerase">
    <location>
        <begin position="1"/>
        <end position="448"/>
    </location>
</feature>
<feature type="active site" description="Proton donor" evidence="1">
    <location>
        <position position="291"/>
    </location>
</feature>
<feature type="active site" evidence="1">
    <location>
        <position position="312"/>
    </location>
</feature>
<feature type="active site" evidence="1">
    <location>
        <position position="425"/>
    </location>
</feature>
<keyword id="KW-0963">Cytoplasm</keyword>
<keyword id="KW-0312">Gluconeogenesis</keyword>
<keyword id="KW-0324">Glycolysis</keyword>
<keyword id="KW-0413">Isomerase</keyword>
<keyword id="KW-1185">Reference proteome</keyword>
<organism>
    <name type="scientific">Symbiobacterium thermophilum (strain DSM 24528 / JCM 14929 / IAM 14863 / T)</name>
    <dbReference type="NCBI Taxonomy" id="292459"/>
    <lineage>
        <taxon>Bacteria</taxon>
        <taxon>Bacillati</taxon>
        <taxon>Bacillota</taxon>
        <taxon>Clostridia</taxon>
        <taxon>Eubacteriales</taxon>
        <taxon>Symbiobacteriaceae</taxon>
        <taxon>Symbiobacterium</taxon>
    </lineage>
</organism>
<reference key="1">
    <citation type="journal article" date="2004" name="Nucleic Acids Res.">
        <title>Genome sequence of Symbiobacterium thermophilum, an uncultivable bacterium that depends on microbial commensalism.</title>
        <authorList>
            <person name="Ueda K."/>
            <person name="Yamashita A."/>
            <person name="Ishikawa J."/>
            <person name="Shimada M."/>
            <person name="Watsuji T."/>
            <person name="Morimura K."/>
            <person name="Ikeda H."/>
            <person name="Hattori M."/>
            <person name="Beppu T."/>
        </authorList>
    </citation>
    <scope>NUCLEOTIDE SEQUENCE [LARGE SCALE GENOMIC DNA]</scope>
    <source>
        <strain>DSM 24528 / JCM 14929 / IAM 14863 / T</strain>
    </source>
</reference>
<dbReference type="EC" id="5.3.1.9" evidence="1"/>
<dbReference type="EMBL" id="AP006840">
    <property type="protein sequence ID" value="BAD39993.1"/>
    <property type="molecule type" value="Genomic_DNA"/>
</dbReference>
<dbReference type="RefSeq" id="WP_011195140.1">
    <property type="nucleotide sequence ID" value="NC_006177.1"/>
</dbReference>
<dbReference type="SMR" id="Q67QQ0"/>
<dbReference type="STRING" id="292459.STH1008"/>
<dbReference type="KEGG" id="sth:STH1008"/>
<dbReference type="eggNOG" id="COG0166">
    <property type="taxonomic scope" value="Bacteria"/>
</dbReference>
<dbReference type="HOGENOM" id="CLU_037303_0_1_9"/>
<dbReference type="OrthoDB" id="140919at2"/>
<dbReference type="UniPathway" id="UPA00109">
    <property type="reaction ID" value="UER00181"/>
</dbReference>
<dbReference type="UniPathway" id="UPA00138"/>
<dbReference type="Proteomes" id="UP000000417">
    <property type="component" value="Chromosome"/>
</dbReference>
<dbReference type="GO" id="GO:0005829">
    <property type="term" value="C:cytosol"/>
    <property type="evidence" value="ECO:0007669"/>
    <property type="project" value="TreeGrafter"/>
</dbReference>
<dbReference type="GO" id="GO:0097367">
    <property type="term" value="F:carbohydrate derivative binding"/>
    <property type="evidence" value="ECO:0007669"/>
    <property type="project" value="InterPro"/>
</dbReference>
<dbReference type="GO" id="GO:0004347">
    <property type="term" value="F:glucose-6-phosphate isomerase activity"/>
    <property type="evidence" value="ECO:0007669"/>
    <property type="project" value="UniProtKB-UniRule"/>
</dbReference>
<dbReference type="GO" id="GO:0048029">
    <property type="term" value="F:monosaccharide binding"/>
    <property type="evidence" value="ECO:0007669"/>
    <property type="project" value="TreeGrafter"/>
</dbReference>
<dbReference type="GO" id="GO:0006094">
    <property type="term" value="P:gluconeogenesis"/>
    <property type="evidence" value="ECO:0007669"/>
    <property type="project" value="UniProtKB-UniRule"/>
</dbReference>
<dbReference type="GO" id="GO:0051156">
    <property type="term" value="P:glucose 6-phosphate metabolic process"/>
    <property type="evidence" value="ECO:0007669"/>
    <property type="project" value="TreeGrafter"/>
</dbReference>
<dbReference type="GO" id="GO:0006096">
    <property type="term" value="P:glycolytic process"/>
    <property type="evidence" value="ECO:0007669"/>
    <property type="project" value="UniProtKB-UniRule"/>
</dbReference>
<dbReference type="CDD" id="cd05015">
    <property type="entry name" value="SIS_PGI_1"/>
    <property type="match status" value="1"/>
</dbReference>
<dbReference type="CDD" id="cd05016">
    <property type="entry name" value="SIS_PGI_2"/>
    <property type="match status" value="1"/>
</dbReference>
<dbReference type="FunFam" id="3.40.50.10490:FF:000015">
    <property type="entry name" value="Glucose-6-phosphate isomerase"/>
    <property type="match status" value="1"/>
</dbReference>
<dbReference type="FunFam" id="3.40.50.10490:FF:000016">
    <property type="entry name" value="Glucose-6-phosphate isomerase"/>
    <property type="match status" value="1"/>
</dbReference>
<dbReference type="Gene3D" id="3.40.50.10490">
    <property type="entry name" value="Glucose-6-phosphate isomerase like protein, domain 1"/>
    <property type="match status" value="2"/>
</dbReference>
<dbReference type="HAMAP" id="MF_00473">
    <property type="entry name" value="G6P_isomerase"/>
    <property type="match status" value="1"/>
</dbReference>
<dbReference type="InterPro" id="IPR001672">
    <property type="entry name" value="G6P_Isomerase"/>
</dbReference>
<dbReference type="InterPro" id="IPR018189">
    <property type="entry name" value="Phosphoglucose_isomerase_CS"/>
</dbReference>
<dbReference type="InterPro" id="IPR046348">
    <property type="entry name" value="SIS_dom_sf"/>
</dbReference>
<dbReference type="InterPro" id="IPR035476">
    <property type="entry name" value="SIS_PGI_1"/>
</dbReference>
<dbReference type="InterPro" id="IPR035482">
    <property type="entry name" value="SIS_PGI_2"/>
</dbReference>
<dbReference type="NCBIfam" id="NF010697">
    <property type="entry name" value="PRK14097.1"/>
    <property type="match status" value="1"/>
</dbReference>
<dbReference type="PANTHER" id="PTHR11469">
    <property type="entry name" value="GLUCOSE-6-PHOSPHATE ISOMERASE"/>
    <property type="match status" value="1"/>
</dbReference>
<dbReference type="PANTHER" id="PTHR11469:SF1">
    <property type="entry name" value="GLUCOSE-6-PHOSPHATE ISOMERASE"/>
    <property type="match status" value="1"/>
</dbReference>
<dbReference type="Pfam" id="PF00342">
    <property type="entry name" value="PGI"/>
    <property type="match status" value="1"/>
</dbReference>
<dbReference type="PRINTS" id="PR00662">
    <property type="entry name" value="G6PISOMERASE"/>
</dbReference>
<dbReference type="SUPFAM" id="SSF53697">
    <property type="entry name" value="SIS domain"/>
    <property type="match status" value="1"/>
</dbReference>
<dbReference type="PROSITE" id="PS00765">
    <property type="entry name" value="P_GLUCOSE_ISOMERASE_1"/>
    <property type="match status" value="1"/>
</dbReference>
<dbReference type="PROSITE" id="PS00174">
    <property type="entry name" value="P_GLUCOSE_ISOMERASE_2"/>
    <property type="match status" value="1"/>
</dbReference>
<dbReference type="PROSITE" id="PS51463">
    <property type="entry name" value="P_GLUCOSE_ISOMERASE_3"/>
    <property type="match status" value="1"/>
</dbReference>
<evidence type="ECO:0000255" key="1">
    <source>
        <dbReference type="HAMAP-Rule" id="MF_00473"/>
    </source>
</evidence>
<gene>
    <name evidence="1" type="primary">pgi</name>
    <name type="ordered locus">STH1008</name>
</gene>